<comment type="catalytic activity">
    <reaction evidence="2">
        <text>alpha-D-galactose 1-phosphate + UDP-alpha-D-glucose = alpha-D-glucose 1-phosphate + UDP-alpha-D-galactose</text>
        <dbReference type="Rhea" id="RHEA:13989"/>
        <dbReference type="ChEBI" id="CHEBI:58336"/>
        <dbReference type="ChEBI" id="CHEBI:58601"/>
        <dbReference type="ChEBI" id="CHEBI:58885"/>
        <dbReference type="ChEBI" id="CHEBI:66914"/>
        <dbReference type="EC" id="2.7.7.12"/>
    </reaction>
</comment>
<comment type="cofactor">
    <cofactor evidence="2">
        <name>Zn(2+)</name>
        <dbReference type="ChEBI" id="CHEBI:29105"/>
    </cofactor>
    <text evidence="2">Binds 1 zinc ion per subunit. Zinc binding seems to play a structural role.</text>
</comment>
<comment type="pathway">
    <text>Carbohydrate metabolism; galactose metabolism.</text>
</comment>
<comment type="subunit">
    <text evidence="1">Homodimer.</text>
</comment>
<comment type="similarity">
    <text evidence="4">Belongs to the galactose-1-phosphate uridylyltransferase type 1 family.</text>
</comment>
<protein>
    <recommendedName>
        <fullName>Galactose-1-phosphate uridylyltransferase</fullName>
        <shortName>Gal-1-P uridylyltransferase</shortName>
        <ecNumber evidence="2">2.7.7.12</ecNumber>
    </recommendedName>
    <alternativeName>
        <fullName>UDP-glucose--hexose-1-phosphate uridylyltransferase</fullName>
    </alternativeName>
</protein>
<feature type="chain" id="PRO_0000169889" description="Galactose-1-phosphate uridylyltransferase">
    <location>
        <begin position="1"/>
        <end position="370"/>
    </location>
</feature>
<feature type="active site" description="Tele-UMP-histidine intermediate" evidence="3">
    <location>
        <position position="179"/>
    </location>
</feature>
<feature type="binding site" evidence="3">
    <location>
        <position position="51"/>
    </location>
    <ligand>
        <name>Zn(2+)</name>
        <dbReference type="ChEBI" id="CHEBI:29105"/>
    </ligand>
</feature>
<feature type="binding site" evidence="3">
    <location>
        <position position="54"/>
    </location>
    <ligand>
        <name>Zn(2+)</name>
        <dbReference type="ChEBI" id="CHEBI:29105"/>
    </ligand>
</feature>
<feature type="binding site" description="in other chain" evidence="1">
    <location>
        <position position="60"/>
    </location>
    <ligand>
        <name>UDP-alpha-D-glucose</name>
        <dbReference type="ChEBI" id="CHEBI:58885"/>
        <note>ligand shared between dimeric partners</note>
    </ligand>
</feature>
<feature type="binding site" description="in other chain" evidence="1">
    <location>
        <begin position="76"/>
        <end position="77"/>
    </location>
    <ligand>
        <name>UDP-alpha-D-glucose</name>
        <dbReference type="ChEBI" id="CHEBI:58885"/>
        <note>ligand shared between dimeric partners</note>
    </ligand>
</feature>
<feature type="binding site" evidence="3">
    <location>
        <position position="121"/>
    </location>
    <ligand>
        <name>Zn(2+)</name>
        <dbReference type="ChEBI" id="CHEBI:29105"/>
    </ligand>
</feature>
<feature type="binding site" evidence="1">
    <location>
        <position position="166"/>
    </location>
    <ligand>
        <name>UDP-alpha-D-glucose</name>
        <dbReference type="ChEBI" id="CHEBI:58885"/>
        <note>ligand shared between dimeric partners</note>
    </ligand>
</feature>
<feature type="binding site" evidence="3">
    <location>
        <position position="177"/>
    </location>
    <ligand>
        <name>Zn(2+)</name>
        <dbReference type="ChEBI" id="CHEBI:29105"/>
    </ligand>
</feature>
<feature type="binding site" description="in other chain" evidence="1">
    <location>
        <position position="181"/>
    </location>
    <ligand>
        <name>UDP-alpha-D-glucose</name>
        <dbReference type="ChEBI" id="CHEBI:58885"/>
        <note>ligand shared between dimeric partners</note>
    </ligand>
</feature>
<feature type="binding site" evidence="2">
    <location>
        <position position="195"/>
    </location>
    <ligand>
        <name>Fe cation</name>
        <dbReference type="ChEBI" id="CHEBI:24875"/>
    </ligand>
</feature>
<feature type="binding site" evidence="2">
    <location>
        <position position="294"/>
    </location>
    <ligand>
        <name>Fe cation</name>
        <dbReference type="ChEBI" id="CHEBI:24875"/>
    </ligand>
</feature>
<feature type="binding site" evidence="2">
    <location>
        <position position="311"/>
    </location>
    <ligand>
        <name>Fe cation</name>
        <dbReference type="ChEBI" id="CHEBI:24875"/>
    </ligand>
</feature>
<feature type="binding site" evidence="2">
    <location>
        <position position="313"/>
    </location>
    <ligand>
        <name>Fe cation</name>
        <dbReference type="ChEBI" id="CHEBI:24875"/>
    </ligand>
</feature>
<feature type="binding site" description="in other chain" evidence="1">
    <location>
        <begin position="326"/>
        <end position="329"/>
    </location>
    <ligand>
        <name>UDP-alpha-D-glucose</name>
        <dbReference type="ChEBI" id="CHEBI:58885"/>
        <note>ligand shared between dimeric partners</note>
    </ligand>
</feature>
<feature type="binding site" description="in other chain" evidence="1">
    <location>
        <begin position="331"/>
        <end position="332"/>
    </location>
    <ligand>
        <name>UDP-alpha-D-glucose</name>
        <dbReference type="ChEBI" id="CHEBI:58885"/>
        <note>ligand shared between dimeric partners</note>
    </ligand>
</feature>
<feature type="sequence conflict" description="In Ref. 1; CAA30091." evidence="4" ref="1">
    <original>GLH</original>
    <variation>VFN</variation>
    <location>
        <begin position="292"/>
        <end position="294"/>
    </location>
</feature>
<gene>
    <name type="primary">GAL7</name>
    <name type="ordered locus">KLLA0F08437g</name>
</gene>
<reference key="1">
    <citation type="journal article" date="1988" name="Nucleic Acids Res.">
        <title>Nucleotide sequence of the galactose gene cluster of Kluyveromyces lactis.</title>
        <authorList>
            <person name="Webster T.D."/>
            <person name="Dickson R.C."/>
        </authorList>
    </citation>
    <scope>NUCLEOTIDE SEQUENCE [GENOMIC DNA]</scope>
    <source>
        <strain>ATCC 8585 / CBS 2359 / DSM 70799 / NBRC 1267 / NRRL Y-1140 / WM37</strain>
    </source>
</reference>
<reference key="2">
    <citation type="journal article" date="2004" name="Nature">
        <title>Genome evolution in yeasts.</title>
        <authorList>
            <person name="Dujon B."/>
            <person name="Sherman D."/>
            <person name="Fischer G."/>
            <person name="Durrens P."/>
            <person name="Casaregola S."/>
            <person name="Lafontaine I."/>
            <person name="de Montigny J."/>
            <person name="Marck C."/>
            <person name="Neuveglise C."/>
            <person name="Talla E."/>
            <person name="Goffard N."/>
            <person name="Frangeul L."/>
            <person name="Aigle M."/>
            <person name="Anthouard V."/>
            <person name="Babour A."/>
            <person name="Barbe V."/>
            <person name="Barnay S."/>
            <person name="Blanchin S."/>
            <person name="Beckerich J.-M."/>
            <person name="Beyne E."/>
            <person name="Bleykasten C."/>
            <person name="Boisrame A."/>
            <person name="Boyer J."/>
            <person name="Cattolico L."/>
            <person name="Confanioleri F."/>
            <person name="de Daruvar A."/>
            <person name="Despons L."/>
            <person name="Fabre E."/>
            <person name="Fairhead C."/>
            <person name="Ferry-Dumazet H."/>
            <person name="Groppi A."/>
            <person name="Hantraye F."/>
            <person name="Hennequin C."/>
            <person name="Jauniaux N."/>
            <person name="Joyet P."/>
            <person name="Kachouri R."/>
            <person name="Kerrest A."/>
            <person name="Koszul R."/>
            <person name="Lemaire M."/>
            <person name="Lesur I."/>
            <person name="Ma L."/>
            <person name="Muller H."/>
            <person name="Nicaud J.-M."/>
            <person name="Nikolski M."/>
            <person name="Oztas S."/>
            <person name="Ozier-Kalogeropoulos O."/>
            <person name="Pellenz S."/>
            <person name="Potier S."/>
            <person name="Richard G.-F."/>
            <person name="Straub M.-L."/>
            <person name="Suleau A."/>
            <person name="Swennen D."/>
            <person name="Tekaia F."/>
            <person name="Wesolowski-Louvel M."/>
            <person name="Westhof E."/>
            <person name="Wirth B."/>
            <person name="Zeniou-Meyer M."/>
            <person name="Zivanovic Y."/>
            <person name="Bolotin-Fukuhara M."/>
            <person name="Thierry A."/>
            <person name="Bouchier C."/>
            <person name="Caudron B."/>
            <person name="Scarpelli C."/>
            <person name="Gaillardin C."/>
            <person name="Weissenbach J."/>
            <person name="Wincker P."/>
            <person name="Souciet J.-L."/>
        </authorList>
    </citation>
    <scope>NUCLEOTIDE SEQUENCE [LARGE SCALE GENOMIC DNA]</scope>
    <source>
        <strain>ATCC 8585 / CBS 2359 / DSM 70799 / NBRC 1267 / NRRL Y-1140 / WM37</strain>
    </source>
</reference>
<keyword id="KW-0119">Carbohydrate metabolism</keyword>
<keyword id="KW-0299">Galactose metabolism</keyword>
<keyword id="KW-0408">Iron</keyword>
<keyword id="KW-0479">Metal-binding</keyword>
<keyword id="KW-0548">Nucleotidyltransferase</keyword>
<keyword id="KW-1185">Reference proteome</keyword>
<keyword id="KW-0808">Transferase</keyword>
<keyword id="KW-0862">Zinc</keyword>
<sequence length="370" mass="42734">MSFDLTDHSHARYNPLTDSWILVSPHRAKRPWLGQQEKPGRNDAPDHDDKCYLCPGTTRATGEQNPDYESTYVFTNGYPAVKLEQPDPELTVSNCDALKERLFKLKGVKGNCYVICFSPKHNLSFPQMAQSEIMNVVKTWTNLFQTLEKEALEENKPYKYLQIFENKGTAMGCSNLHPHGQAWCLDSIPSEPAKEFDHFEKYEHQHGAHLLEDYVNLELREKERIVCENDSFLVVVPYWAVWPFETMVLSKRRIPSLNQFTDKEREDLASIIRNLTIRYDNLFETSFPYSMGLHQASLNATEGELKAAWFHMHFYPPLLRSATVRKFLVGFELLGQPQRDLTAEQAADRLKALSGEVHYLAKLEQEESKT</sequence>
<proteinExistence type="inferred from homology"/>
<dbReference type="EC" id="2.7.7.12" evidence="2"/>
<dbReference type="EMBL" id="X07039">
    <property type="protein sequence ID" value="CAA30091.1"/>
    <property type="molecule type" value="Genomic_DNA"/>
</dbReference>
<dbReference type="EMBL" id="CR382126">
    <property type="protein sequence ID" value="CAG98171.1"/>
    <property type="molecule type" value="Genomic_DNA"/>
</dbReference>
<dbReference type="PIR" id="S01408">
    <property type="entry name" value="XNVKUD"/>
</dbReference>
<dbReference type="RefSeq" id="XP_455463.1">
    <property type="nucleotide sequence ID" value="XM_455463.1"/>
</dbReference>
<dbReference type="SMR" id="P09580"/>
<dbReference type="FunCoup" id="P09580">
    <property type="interactions" value="423"/>
</dbReference>
<dbReference type="STRING" id="284590.P09580"/>
<dbReference type="PaxDb" id="284590-P09580"/>
<dbReference type="KEGG" id="kla:KLLA0_F08437g"/>
<dbReference type="eggNOG" id="KOG2958">
    <property type="taxonomic scope" value="Eukaryota"/>
</dbReference>
<dbReference type="HOGENOM" id="CLU_029960_0_0_1"/>
<dbReference type="InParanoid" id="P09580"/>
<dbReference type="OMA" id="CFENRGA"/>
<dbReference type="UniPathway" id="UPA00214"/>
<dbReference type="Proteomes" id="UP000000598">
    <property type="component" value="Chromosome F"/>
</dbReference>
<dbReference type="GO" id="GO:0005737">
    <property type="term" value="C:cytoplasm"/>
    <property type="evidence" value="ECO:0007669"/>
    <property type="project" value="TreeGrafter"/>
</dbReference>
<dbReference type="GO" id="GO:0008108">
    <property type="term" value="F:UDP-glucose:hexose-1-phosphate uridylyltransferase activity"/>
    <property type="evidence" value="ECO:0007669"/>
    <property type="project" value="UniProtKB-EC"/>
</dbReference>
<dbReference type="GO" id="GO:0008270">
    <property type="term" value="F:zinc ion binding"/>
    <property type="evidence" value="ECO:0007669"/>
    <property type="project" value="InterPro"/>
</dbReference>
<dbReference type="GO" id="GO:0033499">
    <property type="term" value="P:galactose catabolic process via UDP-galactose, Leloir pathway"/>
    <property type="evidence" value="ECO:0007669"/>
    <property type="project" value="TreeGrafter"/>
</dbReference>
<dbReference type="CDD" id="cd00608">
    <property type="entry name" value="GalT"/>
    <property type="match status" value="1"/>
</dbReference>
<dbReference type="FunFam" id="3.30.428.10:FF:000001">
    <property type="entry name" value="Galactose-1-phosphate uridylyltransferase"/>
    <property type="match status" value="1"/>
</dbReference>
<dbReference type="Gene3D" id="3.30.428.10">
    <property type="entry name" value="HIT-like"/>
    <property type="match status" value="2"/>
</dbReference>
<dbReference type="InterPro" id="IPR001937">
    <property type="entry name" value="GalP_UDPtransf1"/>
</dbReference>
<dbReference type="InterPro" id="IPR019779">
    <property type="entry name" value="GalP_UDPtransf1_His-AS"/>
</dbReference>
<dbReference type="InterPro" id="IPR005850">
    <property type="entry name" value="GalP_Utransf_C"/>
</dbReference>
<dbReference type="InterPro" id="IPR005849">
    <property type="entry name" value="GalP_Utransf_N"/>
</dbReference>
<dbReference type="InterPro" id="IPR036265">
    <property type="entry name" value="HIT-like_sf"/>
</dbReference>
<dbReference type="NCBIfam" id="TIGR00209">
    <property type="entry name" value="galT_1"/>
    <property type="match status" value="1"/>
</dbReference>
<dbReference type="NCBIfam" id="NF008724">
    <property type="entry name" value="PRK11720.1"/>
    <property type="match status" value="1"/>
</dbReference>
<dbReference type="PANTHER" id="PTHR11943">
    <property type="entry name" value="GALACTOSE-1-PHOSPHATE URIDYLYLTRANSFERASE"/>
    <property type="match status" value="1"/>
</dbReference>
<dbReference type="PANTHER" id="PTHR11943:SF1">
    <property type="entry name" value="GALACTOSE-1-PHOSPHATE URIDYLYLTRANSFERASE"/>
    <property type="match status" value="1"/>
</dbReference>
<dbReference type="Pfam" id="PF02744">
    <property type="entry name" value="GalP_UDP_tr_C"/>
    <property type="match status" value="1"/>
</dbReference>
<dbReference type="Pfam" id="PF01087">
    <property type="entry name" value="GalP_UDP_transf"/>
    <property type="match status" value="1"/>
</dbReference>
<dbReference type="PIRSF" id="PIRSF000808">
    <property type="entry name" value="GalT"/>
    <property type="match status" value="1"/>
</dbReference>
<dbReference type="SUPFAM" id="SSF54197">
    <property type="entry name" value="HIT-like"/>
    <property type="match status" value="2"/>
</dbReference>
<dbReference type="PROSITE" id="PS00117">
    <property type="entry name" value="GAL_P_UDP_TRANSF_I"/>
    <property type="match status" value="1"/>
</dbReference>
<organism>
    <name type="scientific">Kluyveromyces lactis (strain ATCC 8585 / CBS 2359 / DSM 70799 / NBRC 1267 / NRRL Y-1140 / WM37)</name>
    <name type="common">Yeast</name>
    <name type="synonym">Candida sphaerica</name>
    <dbReference type="NCBI Taxonomy" id="284590"/>
    <lineage>
        <taxon>Eukaryota</taxon>
        <taxon>Fungi</taxon>
        <taxon>Dikarya</taxon>
        <taxon>Ascomycota</taxon>
        <taxon>Saccharomycotina</taxon>
        <taxon>Saccharomycetes</taxon>
        <taxon>Saccharomycetales</taxon>
        <taxon>Saccharomycetaceae</taxon>
        <taxon>Kluyveromyces</taxon>
    </lineage>
</organism>
<accession>P09580</accession>
<accession>Q6CKS6</accession>
<evidence type="ECO:0000250" key="1">
    <source>
        <dbReference type="UniProtKB" id="P07902"/>
    </source>
</evidence>
<evidence type="ECO:0000250" key="2">
    <source>
        <dbReference type="UniProtKB" id="P09148"/>
    </source>
</evidence>
<evidence type="ECO:0000255" key="3">
    <source>
        <dbReference type="PROSITE-ProRule" id="PRU10033"/>
    </source>
</evidence>
<evidence type="ECO:0000305" key="4"/>
<name>GAL7_KLULA</name>